<reference key="1">
    <citation type="journal article" date="2002" name="Science">
        <title>50 million years of genomic stasis in endosymbiotic bacteria.</title>
        <authorList>
            <person name="Tamas I."/>
            <person name="Klasson L."/>
            <person name="Canbaeck B."/>
            <person name="Naeslund A.K."/>
            <person name="Eriksson A.-S."/>
            <person name="Wernegreen J.J."/>
            <person name="Sandstroem J.P."/>
            <person name="Moran N.A."/>
            <person name="Andersson S.G.E."/>
        </authorList>
    </citation>
    <scope>NUCLEOTIDE SEQUENCE [LARGE SCALE GENOMIC DNA]</scope>
    <source>
        <strain>Sg</strain>
    </source>
</reference>
<evidence type="ECO:0000250" key="1"/>
<evidence type="ECO:0000305" key="2"/>
<accession>Q8K9F4</accession>
<gene>
    <name type="primary">trmD</name>
    <name type="ordered locus">BUsg_383</name>
</gene>
<comment type="function">
    <text evidence="1">Specifically methylates guanosine-37 in various tRNAs.</text>
</comment>
<comment type="catalytic activity">
    <reaction>
        <text>guanosine(37) in tRNA + S-adenosyl-L-methionine = N(1)-methylguanosine(37) in tRNA + S-adenosyl-L-homocysteine + H(+)</text>
        <dbReference type="Rhea" id="RHEA:36899"/>
        <dbReference type="Rhea" id="RHEA-COMP:10145"/>
        <dbReference type="Rhea" id="RHEA-COMP:10147"/>
        <dbReference type="ChEBI" id="CHEBI:15378"/>
        <dbReference type="ChEBI" id="CHEBI:57856"/>
        <dbReference type="ChEBI" id="CHEBI:59789"/>
        <dbReference type="ChEBI" id="CHEBI:73542"/>
        <dbReference type="ChEBI" id="CHEBI:74269"/>
        <dbReference type="EC" id="2.1.1.228"/>
    </reaction>
</comment>
<comment type="subunit">
    <text evidence="1">Homodimer.</text>
</comment>
<comment type="subcellular location">
    <subcellularLocation>
        <location evidence="2">Cytoplasm</location>
    </subcellularLocation>
</comment>
<comment type="similarity">
    <text evidence="2">Belongs to the RNA methyltransferase TrmD family.</text>
</comment>
<protein>
    <recommendedName>
        <fullName>tRNA (guanine-N(1)-)-methyltransferase</fullName>
        <ecNumber>2.1.1.228</ecNumber>
    </recommendedName>
    <alternativeName>
        <fullName>M1G-methyltransferase</fullName>
    </alternativeName>
    <alternativeName>
        <fullName>tRNA [GM37] methyltransferase</fullName>
    </alternativeName>
</protein>
<proteinExistence type="inferred from homology"/>
<feature type="chain" id="PRO_0000060347" description="tRNA (guanine-N(1)-)-methyltransferase">
    <location>
        <begin position="1"/>
        <end position="262"/>
    </location>
</feature>
<feature type="binding site" evidence="1">
    <location>
        <position position="129"/>
    </location>
    <ligand>
        <name>S-adenosyl-L-methionine</name>
        <dbReference type="ChEBI" id="CHEBI:59789"/>
    </ligand>
</feature>
<feature type="binding site" evidence="1">
    <location>
        <begin position="149"/>
        <end position="154"/>
    </location>
    <ligand>
        <name>S-adenosyl-L-methionine</name>
        <dbReference type="ChEBI" id="CHEBI:59789"/>
    </ligand>
</feature>
<sequence length="262" mass="30500">MELNKHDQTKTKYDNTLIWFCIITIFPEMFYAITNYGVTGKAIRKNIINIKFFNPRDFTDNKYKSVDDRPYGGGPGMLMSAKPLYLAIKNAKNLLKSAIVIYLSPQGKRLNQKKILEIIKNKKIIFVCGRYEGIDQRIIDCQVDEEWSIGDYILTGGELAAMVAIDSISRFIPGVIKKKQSVQEDSFFNGLLDYPHYTRPKIIEKMKVPEILLSGNHDKIRLWRLKKSLEKTWTKRPDLLKNKILKKEEKILLNELKKINKR</sequence>
<dbReference type="EC" id="2.1.1.228"/>
<dbReference type="EMBL" id="AE013218">
    <property type="protein sequence ID" value="AAM67935.1"/>
    <property type="molecule type" value="Genomic_DNA"/>
</dbReference>
<dbReference type="RefSeq" id="WP_011053902.1">
    <property type="nucleotide sequence ID" value="NC_004061.1"/>
</dbReference>
<dbReference type="SMR" id="Q8K9F4"/>
<dbReference type="STRING" id="198804.BUsg_383"/>
<dbReference type="GeneID" id="93003852"/>
<dbReference type="KEGG" id="bas:BUsg_383"/>
<dbReference type="eggNOG" id="COG0336">
    <property type="taxonomic scope" value="Bacteria"/>
</dbReference>
<dbReference type="HOGENOM" id="CLU_047363_0_1_6"/>
<dbReference type="Proteomes" id="UP000000416">
    <property type="component" value="Chromosome"/>
</dbReference>
<dbReference type="GO" id="GO:0005829">
    <property type="term" value="C:cytosol"/>
    <property type="evidence" value="ECO:0007669"/>
    <property type="project" value="TreeGrafter"/>
</dbReference>
<dbReference type="GO" id="GO:0052906">
    <property type="term" value="F:tRNA (guanine(37)-N1)-methyltransferase activity"/>
    <property type="evidence" value="ECO:0007669"/>
    <property type="project" value="UniProtKB-UniRule"/>
</dbReference>
<dbReference type="GO" id="GO:0002939">
    <property type="term" value="P:tRNA N1-guanine methylation"/>
    <property type="evidence" value="ECO:0007669"/>
    <property type="project" value="TreeGrafter"/>
</dbReference>
<dbReference type="CDD" id="cd18080">
    <property type="entry name" value="TrmD-like"/>
    <property type="match status" value="1"/>
</dbReference>
<dbReference type="FunFam" id="1.10.1270.20:FF:000001">
    <property type="entry name" value="tRNA (guanine-N(1)-)-methyltransferase"/>
    <property type="match status" value="1"/>
</dbReference>
<dbReference type="FunFam" id="3.40.1280.10:FF:000001">
    <property type="entry name" value="tRNA (guanine-N(1)-)-methyltransferase"/>
    <property type="match status" value="1"/>
</dbReference>
<dbReference type="Gene3D" id="3.40.1280.10">
    <property type="match status" value="1"/>
</dbReference>
<dbReference type="Gene3D" id="1.10.1270.20">
    <property type="entry name" value="tRNA(m1g37)methyltransferase, domain 2"/>
    <property type="match status" value="1"/>
</dbReference>
<dbReference type="HAMAP" id="MF_00605">
    <property type="entry name" value="TrmD"/>
    <property type="match status" value="1"/>
</dbReference>
<dbReference type="InterPro" id="IPR029028">
    <property type="entry name" value="Alpha/beta_knot_MTases"/>
</dbReference>
<dbReference type="InterPro" id="IPR023148">
    <property type="entry name" value="tRNA_m1G_MeTrfase_C_sf"/>
</dbReference>
<dbReference type="InterPro" id="IPR002649">
    <property type="entry name" value="tRNA_m1G_MeTrfase_TrmD"/>
</dbReference>
<dbReference type="InterPro" id="IPR029026">
    <property type="entry name" value="tRNA_m1G_MTases_N"/>
</dbReference>
<dbReference type="InterPro" id="IPR016009">
    <property type="entry name" value="tRNA_MeTrfase_TRMD/TRM10"/>
</dbReference>
<dbReference type="NCBIfam" id="NF000648">
    <property type="entry name" value="PRK00026.1"/>
    <property type="match status" value="1"/>
</dbReference>
<dbReference type="NCBIfam" id="TIGR00088">
    <property type="entry name" value="trmD"/>
    <property type="match status" value="1"/>
</dbReference>
<dbReference type="PANTHER" id="PTHR46417">
    <property type="entry name" value="TRNA (GUANINE-N(1)-)-METHYLTRANSFERASE"/>
    <property type="match status" value="1"/>
</dbReference>
<dbReference type="PANTHER" id="PTHR46417:SF1">
    <property type="entry name" value="TRNA (GUANINE-N(1)-)-METHYLTRANSFERASE"/>
    <property type="match status" value="1"/>
</dbReference>
<dbReference type="Pfam" id="PF01746">
    <property type="entry name" value="tRNA_m1G_MT"/>
    <property type="match status" value="1"/>
</dbReference>
<dbReference type="PIRSF" id="PIRSF000386">
    <property type="entry name" value="tRNA_mtase"/>
    <property type="match status" value="1"/>
</dbReference>
<dbReference type="SUPFAM" id="SSF75217">
    <property type="entry name" value="alpha/beta knot"/>
    <property type="match status" value="1"/>
</dbReference>
<organism>
    <name type="scientific">Buchnera aphidicola subsp. Schizaphis graminum (strain Sg)</name>
    <dbReference type="NCBI Taxonomy" id="198804"/>
    <lineage>
        <taxon>Bacteria</taxon>
        <taxon>Pseudomonadati</taxon>
        <taxon>Pseudomonadota</taxon>
        <taxon>Gammaproteobacteria</taxon>
        <taxon>Enterobacterales</taxon>
        <taxon>Erwiniaceae</taxon>
        <taxon>Buchnera</taxon>
    </lineage>
</organism>
<keyword id="KW-0963">Cytoplasm</keyword>
<keyword id="KW-0489">Methyltransferase</keyword>
<keyword id="KW-0949">S-adenosyl-L-methionine</keyword>
<keyword id="KW-0808">Transferase</keyword>
<keyword id="KW-0819">tRNA processing</keyword>
<name>TRMD_BUCAP</name>